<reference key="1">
    <citation type="journal article" date="2015" name="Proc. Natl. Acad. Sci. U.S.A.">
        <title>Trichodesmium genome maintains abundant, widespread noncoding DNA in situ, despite oligotrophic lifestyle.</title>
        <authorList>
            <person name="Walworth N."/>
            <person name="Pfreundt U."/>
            <person name="Nelson W.C."/>
            <person name="Mincer T."/>
            <person name="Heidelberg J.F."/>
            <person name="Fu F."/>
            <person name="Waterbury J.B."/>
            <person name="Glavina del Rio T."/>
            <person name="Goodwin L."/>
            <person name="Kyrpides N.C."/>
            <person name="Land M.L."/>
            <person name="Woyke T."/>
            <person name="Hutchins D.A."/>
            <person name="Hess W.R."/>
            <person name="Webb E.A."/>
        </authorList>
    </citation>
    <scope>NUCLEOTIDE SEQUENCE [LARGE SCALE GENOMIC DNA]</scope>
    <source>
        <strain>IMS101</strain>
    </source>
</reference>
<keyword id="KW-0687">Ribonucleoprotein</keyword>
<keyword id="KW-0689">Ribosomal protein</keyword>
<sequence length="151" mass="16986">MNKTYLPPQDIEGKKWYVIDAEGQRLGRLATAIAMIIRGKNKPTYTPHMDTGDFVIVVNAEKVTVTGKKSSQKLYRRHSGRPGGMKTEVFSKLQARLPQRIIEEAVFGMLPKNSLGRKLHNKLKVYPGSNHPHEAQKPEKLTIQTIPGGER</sequence>
<dbReference type="EMBL" id="CP000393">
    <property type="protein sequence ID" value="ABG52140.1"/>
    <property type="molecule type" value="Genomic_DNA"/>
</dbReference>
<dbReference type="RefSeq" id="WP_011612496.1">
    <property type="nucleotide sequence ID" value="NC_008312.1"/>
</dbReference>
<dbReference type="SMR" id="Q110D4"/>
<dbReference type="STRING" id="203124.Tery_2985"/>
<dbReference type="KEGG" id="ter:Tery_2985"/>
<dbReference type="eggNOG" id="COG0102">
    <property type="taxonomic scope" value="Bacteria"/>
</dbReference>
<dbReference type="HOGENOM" id="CLU_082184_2_2_3"/>
<dbReference type="OrthoDB" id="9801330at2"/>
<dbReference type="GO" id="GO:0022625">
    <property type="term" value="C:cytosolic large ribosomal subunit"/>
    <property type="evidence" value="ECO:0007669"/>
    <property type="project" value="TreeGrafter"/>
</dbReference>
<dbReference type="GO" id="GO:0003729">
    <property type="term" value="F:mRNA binding"/>
    <property type="evidence" value="ECO:0007669"/>
    <property type="project" value="TreeGrafter"/>
</dbReference>
<dbReference type="GO" id="GO:0003735">
    <property type="term" value="F:structural constituent of ribosome"/>
    <property type="evidence" value="ECO:0007669"/>
    <property type="project" value="InterPro"/>
</dbReference>
<dbReference type="GO" id="GO:0017148">
    <property type="term" value="P:negative regulation of translation"/>
    <property type="evidence" value="ECO:0007669"/>
    <property type="project" value="TreeGrafter"/>
</dbReference>
<dbReference type="GO" id="GO:0006412">
    <property type="term" value="P:translation"/>
    <property type="evidence" value="ECO:0007669"/>
    <property type="project" value="UniProtKB-UniRule"/>
</dbReference>
<dbReference type="CDD" id="cd00392">
    <property type="entry name" value="Ribosomal_L13"/>
    <property type="match status" value="1"/>
</dbReference>
<dbReference type="FunFam" id="3.90.1180.10:FF:000001">
    <property type="entry name" value="50S ribosomal protein L13"/>
    <property type="match status" value="1"/>
</dbReference>
<dbReference type="Gene3D" id="3.90.1180.10">
    <property type="entry name" value="Ribosomal protein L13"/>
    <property type="match status" value="1"/>
</dbReference>
<dbReference type="HAMAP" id="MF_01366">
    <property type="entry name" value="Ribosomal_uL13"/>
    <property type="match status" value="1"/>
</dbReference>
<dbReference type="InterPro" id="IPR005822">
    <property type="entry name" value="Ribosomal_uL13"/>
</dbReference>
<dbReference type="InterPro" id="IPR005823">
    <property type="entry name" value="Ribosomal_uL13_bac-type"/>
</dbReference>
<dbReference type="InterPro" id="IPR023563">
    <property type="entry name" value="Ribosomal_uL13_CS"/>
</dbReference>
<dbReference type="InterPro" id="IPR036899">
    <property type="entry name" value="Ribosomal_uL13_sf"/>
</dbReference>
<dbReference type="NCBIfam" id="TIGR01066">
    <property type="entry name" value="rplM_bact"/>
    <property type="match status" value="1"/>
</dbReference>
<dbReference type="PANTHER" id="PTHR11545:SF2">
    <property type="entry name" value="LARGE RIBOSOMAL SUBUNIT PROTEIN UL13M"/>
    <property type="match status" value="1"/>
</dbReference>
<dbReference type="PANTHER" id="PTHR11545">
    <property type="entry name" value="RIBOSOMAL PROTEIN L13"/>
    <property type="match status" value="1"/>
</dbReference>
<dbReference type="Pfam" id="PF00572">
    <property type="entry name" value="Ribosomal_L13"/>
    <property type="match status" value="1"/>
</dbReference>
<dbReference type="PIRSF" id="PIRSF002181">
    <property type="entry name" value="Ribosomal_L13"/>
    <property type="match status" value="1"/>
</dbReference>
<dbReference type="SUPFAM" id="SSF52161">
    <property type="entry name" value="Ribosomal protein L13"/>
    <property type="match status" value="1"/>
</dbReference>
<dbReference type="PROSITE" id="PS00783">
    <property type="entry name" value="RIBOSOMAL_L13"/>
    <property type="match status" value="1"/>
</dbReference>
<accession>Q110D4</accession>
<proteinExistence type="inferred from homology"/>
<organism>
    <name type="scientific">Trichodesmium erythraeum (strain IMS101)</name>
    <dbReference type="NCBI Taxonomy" id="203124"/>
    <lineage>
        <taxon>Bacteria</taxon>
        <taxon>Bacillati</taxon>
        <taxon>Cyanobacteriota</taxon>
        <taxon>Cyanophyceae</taxon>
        <taxon>Oscillatoriophycideae</taxon>
        <taxon>Oscillatoriales</taxon>
        <taxon>Microcoleaceae</taxon>
        <taxon>Trichodesmium</taxon>
    </lineage>
</organism>
<gene>
    <name evidence="1" type="primary">rplM</name>
    <name evidence="1" type="synonym">rpl13</name>
    <name type="ordered locus">Tery_2985</name>
</gene>
<feature type="chain" id="PRO_0000261819" description="Large ribosomal subunit protein uL13">
    <location>
        <begin position="1"/>
        <end position="151"/>
    </location>
</feature>
<feature type="region of interest" description="Disordered" evidence="2">
    <location>
        <begin position="126"/>
        <end position="151"/>
    </location>
</feature>
<feature type="compositionally biased region" description="Basic and acidic residues" evidence="2">
    <location>
        <begin position="131"/>
        <end position="140"/>
    </location>
</feature>
<evidence type="ECO:0000255" key="1">
    <source>
        <dbReference type="HAMAP-Rule" id="MF_01366"/>
    </source>
</evidence>
<evidence type="ECO:0000256" key="2">
    <source>
        <dbReference type="SAM" id="MobiDB-lite"/>
    </source>
</evidence>
<evidence type="ECO:0000305" key="3"/>
<protein>
    <recommendedName>
        <fullName evidence="1">Large ribosomal subunit protein uL13</fullName>
    </recommendedName>
    <alternativeName>
        <fullName evidence="3">50S ribosomal protein L13</fullName>
    </alternativeName>
</protein>
<comment type="function">
    <text evidence="1">This protein is one of the early assembly proteins of the 50S ribosomal subunit, although it is not seen to bind rRNA by itself. It is important during the early stages of 50S assembly.</text>
</comment>
<comment type="subunit">
    <text evidence="1">Part of the 50S ribosomal subunit.</text>
</comment>
<comment type="similarity">
    <text evidence="1">Belongs to the universal ribosomal protein uL13 family.</text>
</comment>
<name>RL13_TRIEI</name>